<gene>
    <name evidence="1" type="primary">secB</name>
    <name type="ordered locus">RALTA_A0279</name>
</gene>
<accession>B2AGQ0</accession>
<evidence type="ECO:0000255" key="1">
    <source>
        <dbReference type="HAMAP-Rule" id="MF_00821"/>
    </source>
</evidence>
<evidence type="ECO:0000256" key="2">
    <source>
        <dbReference type="SAM" id="MobiDB-lite"/>
    </source>
</evidence>
<organism>
    <name type="scientific">Cupriavidus taiwanensis (strain DSM 17343 / BCRC 17206 / CCUG 44338 / CIP 107171 / LMG 19424 / R1)</name>
    <name type="common">Ralstonia taiwanensis (strain LMG 19424)</name>
    <dbReference type="NCBI Taxonomy" id="977880"/>
    <lineage>
        <taxon>Bacteria</taxon>
        <taxon>Pseudomonadati</taxon>
        <taxon>Pseudomonadota</taxon>
        <taxon>Betaproteobacteria</taxon>
        <taxon>Burkholderiales</taxon>
        <taxon>Burkholderiaceae</taxon>
        <taxon>Cupriavidus</taxon>
    </lineage>
</organism>
<sequence>MSDQQNTQQDDQPFFNIQRVYLKDMSLEQPNSPAIFLESEAPSVEVQVNVGASQLQEGIFEVVVTGTVTTKVQDKVAFLVEAHQAGIFDIRNVPVEQLDPLLGIACPTILYPYLRGNIADVITRAGFQAIHLSEINFQALYEQRLQAAMEEAQGAEGGNSGIVMPDGSQARH</sequence>
<proteinExistence type="inferred from homology"/>
<protein>
    <recommendedName>
        <fullName evidence="1">Protein-export protein SecB</fullName>
    </recommendedName>
</protein>
<comment type="function">
    <text evidence="1">One of the proteins required for the normal export of preproteins out of the cell cytoplasm. It is a molecular chaperone that binds to a subset of precursor proteins, maintaining them in a translocation-competent state. It also specifically binds to its receptor SecA.</text>
</comment>
<comment type="subunit">
    <text evidence="1">Homotetramer, a dimer of dimers. One homotetramer interacts with 1 SecA dimer.</text>
</comment>
<comment type="subcellular location">
    <subcellularLocation>
        <location evidence="1">Cytoplasm</location>
    </subcellularLocation>
</comment>
<comment type="similarity">
    <text evidence="1">Belongs to the SecB family.</text>
</comment>
<reference key="1">
    <citation type="journal article" date="2008" name="Genome Res.">
        <title>Genome sequence of the beta-rhizobium Cupriavidus taiwanensis and comparative genomics of rhizobia.</title>
        <authorList>
            <person name="Amadou C."/>
            <person name="Pascal G."/>
            <person name="Mangenot S."/>
            <person name="Glew M."/>
            <person name="Bontemps C."/>
            <person name="Capela D."/>
            <person name="Carrere S."/>
            <person name="Cruveiller S."/>
            <person name="Dossat C."/>
            <person name="Lajus A."/>
            <person name="Marchetti M."/>
            <person name="Poinsot V."/>
            <person name="Rouy Z."/>
            <person name="Servin B."/>
            <person name="Saad M."/>
            <person name="Schenowitz C."/>
            <person name="Barbe V."/>
            <person name="Batut J."/>
            <person name="Medigue C."/>
            <person name="Masson-Boivin C."/>
        </authorList>
    </citation>
    <scope>NUCLEOTIDE SEQUENCE [LARGE SCALE GENOMIC DNA]</scope>
    <source>
        <strain>DSM 17343 / BCRC 17206 / CCUG 44338 / CIP 107171 / LMG 19424 / R1</strain>
    </source>
</reference>
<keyword id="KW-0143">Chaperone</keyword>
<keyword id="KW-0963">Cytoplasm</keyword>
<keyword id="KW-0653">Protein transport</keyword>
<keyword id="KW-0811">Translocation</keyword>
<keyword id="KW-0813">Transport</keyword>
<dbReference type="EMBL" id="CU633749">
    <property type="protein sequence ID" value="CAP62949.1"/>
    <property type="molecule type" value="Genomic_DNA"/>
</dbReference>
<dbReference type="RefSeq" id="WP_012351616.1">
    <property type="nucleotide sequence ID" value="NC_010528.1"/>
</dbReference>
<dbReference type="SMR" id="B2AGQ0"/>
<dbReference type="GeneID" id="29762720"/>
<dbReference type="KEGG" id="cti:RALTA_A0279"/>
<dbReference type="eggNOG" id="COG1952">
    <property type="taxonomic scope" value="Bacteria"/>
</dbReference>
<dbReference type="HOGENOM" id="CLU_111574_1_0_4"/>
<dbReference type="BioCyc" id="CTAI977880:RALTA_RS01365-MONOMER"/>
<dbReference type="Proteomes" id="UP000001692">
    <property type="component" value="Chromosome 1"/>
</dbReference>
<dbReference type="GO" id="GO:0005737">
    <property type="term" value="C:cytoplasm"/>
    <property type="evidence" value="ECO:0007669"/>
    <property type="project" value="UniProtKB-SubCell"/>
</dbReference>
<dbReference type="GO" id="GO:0051082">
    <property type="term" value="F:unfolded protein binding"/>
    <property type="evidence" value="ECO:0007669"/>
    <property type="project" value="InterPro"/>
</dbReference>
<dbReference type="GO" id="GO:0006457">
    <property type="term" value="P:protein folding"/>
    <property type="evidence" value="ECO:0007669"/>
    <property type="project" value="UniProtKB-UniRule"/>
</dbReference>
<dbReference type="GO" id="GO:0051262">
    <property type="term" value="P:protein tetramerization"/>
    <property type="evidence" value="ECO:0007669"/>
    <property type="project" value="InterPro"/>
</dbReference>
<dbReference type="GO" id="GO:0015031">
    <property type="term" value="P:protein transport"/>
    <property type="evidence" value="ECO:0007669"/>
    <property type="project" value="UniProtKB-UniRule"/>
</dbReference>
<dbReference type="Gene3D" id="3.10.420.10">
    <property type="entry name" value="SecB-like"/>
    <property type="match status" value="1"/>
</dbReference>
<dbReference type="HAMAP" id="MF_00821">
    <property type="entry name" value="SecB"/>
    <property type="match status" value="1"/>
</dbReference>
<dbReference type="InterPro" id="IPR003708">
    <property type="entry name" value="SecB"/>
</dbReference>
<dbReference type="InterPro" id="IPR035958">
    <property type="entry name" value="SecB-like_sf"/>
</dbReference>
<dbReference type="NCBIfam" id="NF004394">
    <property type="entry name" value="PRK05751.1-5"/>
    <property type="match status" value="1"/>
</dbReference>
<dbReference type="NCBIfam" id="TIGR00809">
    <property type="entry name" value="secB"/>
    <property type="match status" value="1"/>
</dbReference>
<dbReference type="PANTHER" id="PTHR36918">
    <property type="match status" value="1"/>
</dbReference>
<dbReference type="PANTHER" id="PTHR36918:SF1">
    <property type="entry name" value="PROTEIN-EXPORT PROTEIN SECB"/>
    <property type="match status" value="1"/>
</dbReference>
<dbReference type="Pfam" id="PF02556">
    <property type="entry name" value="SecB"/>
    <property type="match status" value="1"/>
</dbReference>
<dbReference type="PRINTS" id="PR01594">
    <property type="entry name" value="SECBCHAPRONE"/>
</dbReference>
<dbReference type="SUPFAM" id="SSF54611">
    <property type="entry name" value="SecB-like"/>
    <property type="match status" value="1"/>
</dbReference>
<feature type="chain" id="PRO_1000134374" description="Protein-export protein SecB">
    <location>
        <begin position="1"/>
        <end position="172"/>
    </location>
</feature>
<feature type="region of interest" description="Disordered" evidence="2">
    <location>
        <begin position="152"/>
        <end position="172"/>
    </location>
</feature>
<name>SECB_CUPTR</name>